<accession>A5U9Q0</accession>
<proteinExistence type="inferred from homology"/>
<sequence length="120" mass="13343">MSLSRQSCGRVVRVTGRASARGLIFVIQVYRHMLSPLRPASCRFVPTCSQYAVDALTEYGLLRGSWLTMIRLAKCGPWHRGGWDPIPEGLTTGRSCQTDVDGANDDWNPASKRGERESFV</sequence>
<feature type="chain" id="PRO_1000013103" description="Putative membrane protein insertion efficiency factor">
    <location>
        <begin position="1"/>
        <end position="120"/>
    </location>
</feature>
<feature type="region of interest" description="Disordered" evidence="2">
    <location>
        <begin position="93"/>
        <end position="120"/>
    </location>
</feature>
<protein>
    <recommendedName>
        <fullName evidence="1">Putative membrane protein insertion efficiency factor</fullName>
    </recommendedName>
</protein>
<evidence type="ECO:0000255" key="1">
    <source>
        <dbReference type="HAMAP-Rule" id="MF_00386"/>
    </source>
</evidence>
<evidence type="ECO:0000256" key="2">
    <source>
        <dbReference type="SAM" id="MobiDB-lite"/>
    </source>
</evidence>
<comment type="function">
    <text evidence="1">Could be involved in insertion of integral membrane proteins into the membrane.</text>
</comment>
<comment type="subcellular location">
    <subcellularLocation>
        <location evidence="1">Cell membrane</location>
        <topology evidence="1">Peripheral membrane protein</topology>
        <orientation evidence="1">Cytoplasmic side</orientation>
    </subcellularLocation>
</comment>
<comment type="similarity">
    <text evidence="1">Belongs to the UPF0161 family.</text>
</comment>
<name>YIDD_MYCTA</name>
<reference key="1">
    <citation type="journal article" date="2008" name="PLoS ONE">
        <title>Genetic basis of virulence attenuation revealed by comparative genomic analysis of Mycobacterium tuberculosis strain H37Ra versus H37Rv.</title>
        <authorList>
            <person name="Zheng H."/>
            <person name="Lu L."/>
            <person name="Wang B."/>
            <person name="Pu S."/>
            <person name="Zhang X."/>
            <person name="Zhu G."/>
            <person name="Shi W."/>
            <person name="Zhang L."/>
            <person name="Wang H."/>
            <person name="Wang S."/>
            <person name="Zhao G."/>
            <person name="Zhang Y."/>
        </authorList>
    </citation>
    <scope>NUCLEOTIDE SEQUENCE [LARGE SCALE GENOMIC DNA]</scope>
    <source>
        <strain>ATCC 25177 / H37Ra</strain>
    </source>
</reference>
<gene>
    <name type="ordered locus">MRA_3961</name>
</gene>
<dbReference type="EMBL" id="CP000611">
    <property type="protein sequence ID" value="ABQ75750.1"/>
    <property type="molecule type" value="Genomic_DNA"/>
</dbReference>
<dbReference type="KEGG" id="mra:MRA_3961"/>
<dbReference type="eggNOG" id="COG0759">
    <property type="taxonomic scope" value="Bacteria"/>
</dbReference>
<dbReference type="HOGENOM" id="CLU_144811_2_1_11"/>
<dbReference type="Proteomes" id="UP000001988">
    <property type="component" value="Chromosome"/>
</dbReference>
<dbReference type="GO" id="GO:0005886">
    <property type="term" value="C:plasma membrane"/>
    <property type="evidence" value="ECO:0007669"/>
    <property type="project" value="UniProtKB-SubCell"/>
</dbReference>
<dbReference type="HAMAP" id="MF_00386">
    <property type="entry name" value="UPF0161_YidD"/>
    <property type="match status" value="1"/>
</dbReference>
<dbReference type="InterPro" id="IPR002696">
    <property type="entry name" value="Membr_insert_effic_factor_YidD"/>
</dbReference>
<dbReference type="NCBIfam" id="TIGR00278">
    <property type="entry name" value="membrane protein insertion efficiency factor YidD"/>
    <property type="match status" value="1"/>
</dbReference>
<dbReference type="PANTHER" id="PTHR33383">
    <property type="entry name" value="MEMBRANE PROTEIN INSERTION EFFICIENCY FACTOR-RELATED"/>
    <property type="match status" value="1"/>
</dbReference>
<dbReference type="PANTHER" id="PTHR33383:SF1">
    <property type="entry name" value="MEMBRANE PROTEIN INSERTION EFFICIENCY FACTOR-RELATED"/>
    <property type="match status" value="1"/>
</dbReference>
<dbReference type="Pfam" id="PF01809">
    <property type="entry name" value="YidD"/>
    <property type="match status" value="1"/>
</dbReference>
<dbReference type="SMART" id="SM01234">
    <property type="entry name" value="Haemolytic"/>
    <property type="match status" value="1"/>
</dbReference>
<keyword id="KW-1003">Cell membrane</keyword>
<keyword id="KW-0472">Membrane</keyword>
<keyword id="KW-1185">Reference proteome</keyword>
<organism>
    <name type="scientific">Mycobacterium tuberculosis (strain ATCC 25177 / H37Ra)</name>
    <dbReference type="NCBI Taxonomy" id="419947"/>
    <lineage>
        <taxon>Bacteria</taxon>
        <taxon>Bacillati</taxon>
        <taxon>Actinomycetota</taxon>
        <taxon>Actinomycetes</taxon>
        <taxon>Mycobacteriales</taxon>
        <taxon>Mycobacteriaceae</taxon>
        <taxon>Mycobacterium</taxon>
        <taxon>Mycobacterium tuberculosis complex</taxon>
    </lineage>
</organism>